<name>NXF5_HUMAN</name>
<comment type="function">
    <text>Could be involved in the export of mRNA from the nucleus to the cytoplasm. Could also have a role in polarized cytoplasmic transport and localization of mRNA in neurons.</text>
</comment>
<comment type="subunit">
    <text>Interacts with NXT1 and NXT2.</text>
</comment>
<comment type="subcellular location">
    <subcellularLocation>
        <location>Cytoplasm</location>
    </subcellularLocation>
    <subcellularLocation>
        <location>Nucleus</location>
    </subcellularLocation>
    <text>Mainly localized in the cytoplasm of cells and more particularly in the cell body and neurites of hippocampal neurons. Although nuclear localization is also observed. Not detected at nuclear rim.</text>
</comment>
<comment type="alternative products">
    <event type="alternative splicing"/>
    <isoform>
        <id>Q9H1B4-1</id>
        <name>A</name>
        <name>TAPL-1a</name>
        <sequence type="displayed"/>
    </isoform>
    <isoform>
        <id>Q9H1B4-2</id>
        <name>B</name>
        <name>TAPL-1b</name>
        <sequence type="described" ref="VSP_003734 VSP_003737"/>
    </isoform>
    <isoform>
        <id>Q9H1B4-3</id>
        <name>C</name>
        <name>TAPL-1c</name>
        <sequence type="described" ref="VSP_003732 VSP_003733"/>
    </isoform>
    <isoform>
        <id>Q9H1B4-4</id>
        <name>D</name>
        <name>TAPL-1d</name>
        <sequence type="described" ref="VSP_003731 VSP_003734 VSP_003737"/>
    </isoform>
    <isoform>
        <id>Q9H1B4-5</id>
        <name>E</name>
        <name>TAPL-1e</name>
        <sequence type="described" ref="VSP_003731 VSP_003735 VSP_003736"/>
    </isoform>
    <isoform>
        <id>Q9H1B4-6</id>
        <name>F</name>
        <sequence type="described" ref="VSP_043896"/>
    </isoform>
    <text>Additional isoforms seem to exist.</text>
</comment>
<comment type="domain">
    <text evidence="1">The NTF2 domain heterodimerizes with NXT1 and NXT2.</text>
</comment>
<comment type="domain">
    <text>The RNA-binding domain is a non-canonical RNP-type domain.</text>
</comment>
<comment type="disease">
    <text evidence="2">A chromosomal aberration involving NXF5 has been observed in one patient with a syndromic form of intellectual disability and short stature. Pericentric inversion inv(X)(p21.1;q22) that interrupts NXF5.</text>
</comment>
<comment type="miscellaneous">
    <molecule>Isoform A</molecule>
    <text>May be produced at very low levels due to a premature stop codon in the mRNA, leading to nonsense-mediated mRNA decay.</text>
</comment>
<comment type="miscellaneous">
    <molecule>Isoform B</molecule>
    <text evidence="5">May be produced at very low levels due to a premature stop codon in the mRNA, leading to nonsense-mediated mRNA decay.</text>
</comment>
<comment type="miscellaneous">
    <molecule>Isoform C</molecule>
    <text evidence="5">May be produced at very low levels due to a premature stop codon in the mRNA, leading to nonsense-mediated mRNA decay.</text>
</comment>
<comment type="miscellaneous">
    <molecule>Isoform D</molecule>
    <text evidence="5">May be produced at very low levels due to a premature stop codon in the mRNA, leading to nonsense-mediated mRNA decay.</text>
</comment>
<comment type="miscellaneous">
    <molecule>Isoform E</molecule>
    <text evidence="5">May be produced at very low levels due to a premature stop codon in the mRNA, leading to nonsense-mediated mRNA decay.</text>
</comment>
<comment type="similarity">
    <text evidence="5">Belongs to the NXF family.</text>
</comment>
<keyword id="KW-0025">Alternative splicing</keyword>
<keyword id="KW-0963">Cytoplasm</keyword>
<keyword id="KW-0433">Leucine-rich repeat</keyword>
<keyword id="KW-0509">mRNA transport</keyword>
<keyword id="KW-0539">Nucleus</keyword>
<keyword id="KW-1185">Reference proteome</keyword>
<keyword id="KW-0677">Repeat</keyword>
<keyword id="KW-0694">RNA-binding</keyword>
<keyword id="KW-0813">Transport</keyword>
<protein>
    <recommendedName>
        <fullName>Nuclear RNA export factor 5</fullName>
    </recommendedName>
    <alternativeName>
        <fullName>TAP-like protein 1</fullName>
        <shortName>TAPL-1</shortName>
    </alternativeName>
</protein>
<organism>
    <name type="scientific">Homo sapiens</name>
    <name type="common">Human</name>
    <dbReference type="NCBI Taxonomy" id="9606"/>
    <lineage>
        <taxon>Eukaryota</taxon>
        <taxon>Metazoa</taxon>
        <taxon>Chordata</taxon>
        <taxon>Craniata</taxon>
        <taxon>Vertebrata</taxon>
        <taxon>Euteleostomi</taxon>
        <taxon>Mammalia</taxon>
        <taxon>Eutheria</taxon>
        <taxon>Euarchontoglires</taxon>
        <taxon>Primates</taxon>
        <taxon>Haplorrhini</taxon>
        <taxon>Catarrhini</taxon>
        <taxon>Hominidae</taxon>
        <taxon>Homo</taxon>
    </lineage>
</organism>
<sequence length="397" mass="45628">MRRNTQDENMRKWFKVTIPYGIKYDKAWLMNSIQSNCSVPFTPVDFHYIRNRACFFVQVASAASALKDVSYKIYDDENQKICIFVSHFTAPYSVKNKLKPGQMEMLKLTMNKRYNVSQQALDLQNLRFDPDLMGRDIDIILNRRNCMAATLKITERNFPELLSLNLCNNKLYQLDGLSDITEKAPKVKTLNLSKNKLESAWELGKVKGLKLEELWLEGNPLCSTFSDQSAYVSAIRDCFPKLLRLDGRELSAPVIVDIDSSETMKPCKENFTGSETLKHLVLQFLQQSNLCKYFKDSRNIKILKDPYLQRKLLKHTKCPRNVDSLSALPETQHDFTSILVDMWYQTVNTCFLPRAGPESQRWWCLLSLKWKDGLRVLILPSCGPSSLPLAAIPVCAS</sequence>
<gene>
    <name type="primary">NXF5</name>
    <name type="synonym">TAPL1</name>
</gene>
<dbReference type="EMBL" id="AJ277654">
    <property type="protein sequence ID" value="CAC20428.1"/>
    <property type="molecule type" value="mRNA"/>
</dbReference>
<dbReference type="EMBL" id="AJ277655">
    <property type="protein sequence ID" value="CAC20429.1"/>
    <property type="molecule type" value="mRNA"/>
</dbReference>
<dbReference type="EMBL" id="AJ277656">
    <property type="protein sequence ID" value="CAC20430.1"/>
    <property type="molecule type" value="mRNA"/>
</dbReference>
<dbReference type="EMBL" id="AJ277657">
    <property type="protein sequence ID" value="CAC20431.1"/>
    <property type="molecule type" value="mRNA"/>
</dbReference>
<dbReference type="EMBL" id="AJ277658">
    <property type="protein sequence ID" value="CAC20432.1"/>
    <property type="molecule type" value="mRNA"/>
</dbReference>
<dbReference type="EMBL" id="AL672207">
    <property type="protein sequence ID" value="CAI42476.1"/>
    <property type="molecule type" value="Genomic_DNA"/>
</dbReference>
<dbReference type="EMBL" id="Z70228">
    <property type="protein sequence ID" value="CAI42476.1"/>
    <property type="status" value="JOINED"/>
    <property type="molecule type" value="Genomic_DNA"/>
</dbReference>
<dbReference type="EMBL" id="AL672207">
    <property type="protein sequence ID" value="CAI42478.1"/>
    <property type="molecule type" value="Genomic_DNA"/>
</dbReference>
<dbReference type="EMBL" id="Z70228">
    <property type="protein sequence ID" value="CAI42478.1"/>
    <property type="status" value="JOINED"/>
    <property type="molecule type" value="Genomic_DNA"/>
</dbReference>
<dbReference type="EMBL" id="AL672207">
    <property type="protein sequence ID" value="CAI42475.1"/>
    <property type="molecule type" value="Genomic_DNA"/>
</dbReference>
<dbReference type="EMBL" id="Z70228">
    <property type="protein sequence ID" value="CAI42475.1"/>
    <property type="status" value="JOINED"/>
    <property type="molecule type" value="Genomic_DNA"/>
</dbReference>
<dbReference type="EMBL" id="AL672207">
    <property type="protein sequence ID" value="CAI42477.1"/>
    <property type="molecule type" value="Genomic_DNA"/>
</dbReference>
<dbReference type="EMBL" id="Z70228">
    <property type="protein sequence ID" value="CAI42477.1"/>
    <property type="status" value="JOINED"/>
    <property type="molecule type" value="Genomic_DNA"/>
</dbReference>
<dbReference type="EMBL" id="BC131708">
    <property type="protein sequence ID" value="AAI31709.1"/>
    <property type="molecule type" value="mRNA"/>
</dbReference>
<dbReference type="RefSeq" id="NP_116564.2">
    <property type="nucleotide sequence ID" value="NM_032946.2"/>
</dbReference>
<dbReference type="SMR" id="Q9H1B4"/>
<dbReference type="BioGRID" id="121023">
    <property type="interactions" value="24"/>
</dbReference>
<dbReference type="ComplexPortal" id="CPX-2433">
    <property type="entry name" value="NXF5-NXT1 mRNA nuclear export factor complex"/>
</dbReference>
<dbReference type="ComplexPortal" id="CPX-2549">
    <property type="entry name" value="NXF5-NXT2 mRNA nuclear export factor complex"/>
</dbReference>
<dbReference type="FunCoup" id="Q9H1B4">
    <property type="interactions" value="429"/>
</dbReference>
<dbReference type="IntAct" id="Q9H1B4">
    <property type="interactions" value="4"/>
</dbReference>
<dbReference type="STRING" id="9606.ENSP00000426978"/>
<dbReference type="iPTMnet" id="Q9H1B4"/>
<dbReference type="PhosphoSitePlus" id="Q9H1B4"/>
<dbReference type="SwissPalm" id="Q9H1B4"/>
<dbReference type="BioMuta" id="NXF5"/>
<dbReference type="DMDM" id="20978537"/>
<dbReference type="jPOST" id="Q9H1B4"/>
<dbReference type="MassIVE" id="Q9H1B4"/>
<dbReference type="PaxDb" id="9606-ENSP00000426978"/>
<dbReference type="PeptideAtlas" id="Q9H1B4"/>
<dbReference type="ProteomicsDB" id="80387">
    <molecule id="Q9H1B4-1"/>
</dbReference>
<dbReference type="ProteomicsDB" id="80388">
    <molecule id="Q9H1B4-2"/>
</dbReference>
<dbReference type="ProteomicsDB" id="80389">
    <molecule id="Q9H1B4-3"/>
</dbReference>
<dbReference type="ProteomicsDB" id="80390">
    <molecule id="Q9H1B4-4"/>
</dbReference>
<dbReference type="ProteomicsDB" id="80391">
    <molecule id="Q9H1B4-5"/>
</dbReference>
<dbReference type="ProteomicsDB" id="80392">
    <molecule id="Q9H1B4-6"/>
</dbReference>
<dbReference type="DNASU" id="55998"/>
<dbReference type="UCSC" id="uc004eih.2">
    <molecule id="Q9H1B4-1"/>
    <property type="organism name" value="human"/>
</dbReference>
<dbReference type="AGR" id="HGNC:8075"/>
<dbReference type="DisGeNET" id="55998"/>
<dbReference type="GeneCards" id="NXF5"/>
<dbReference type="HGNC" id="HGNC:8075">
    <property type="gene designation" value="NXF5"/>
</dbReference>
<dbReference type="MalaCards" id="NXF5"/>
<dbReference type="MIM" id="300319">
    <property type="type" value="gene"/>
</dbReference>
<dbReference type="neXtProt" id="NX_Q9H1B4"/>
<dbReference type="PharmGKB" id="PA31862"/>
<dbReference type="VEuPathDB" id="HostDB:ENSG00000126952"/>
<dbReference type="eggNOG" id="KOG3763">
    <property type="taxonomic scope" value="Eukaryota"/>
</dbReference>
<dbReference type="HOGENOM" id="CLU_1585916_0_0_1"/>
<dbReference type="InParanoid" id="Q9H1B4"/>
<dbReference type="OMA" id="HIDEACE"/>
<dbReference type="PAN-GO" id="Q9H1B4">
    <property type="GO annotations" value="3 GO annotations based on evolutionary models"/>
</dbReference>
<dbReference type="PhylomeDB" id="Q9H1B4"/>
<dbReference type="TreeFam" id="TF314566"/>
<dbReference type="PathwayCommons" id="Q9H1B4"/>
<dbReference type="SignaLink" id="Q9H1B4"/>
<dbReference type="BioGRID-ORCS" id="55998">
    <property type="hits" value="10 hits in 759 CRISPR screens"/>
</dbReference>
<dbReference type="CD-CODE" id="DEE660B4">
    <property type="entry name" value="Stress granule"/>
</dbReference>
<dbReference type="GenomeRNAi" id="55998"/>
<dbReference type="Pharos" id="Q9H1B4">
    <property type="development level" value="Tbio"/>
</dbReference>
<dbReference type="PRO" id="PR:Q9H1B4"/>
<dbReference type="Proteomes" id="UP000005640">
    <property type="component" value="Chromosome X"/>
</dbReference>
<dbReference type="RNAct" id="Q9H1B4">
    <property type="molecule type" value="protein"/>
</dbReference>
<dbReference type="GO" id="GO:0005737">
    <property type="term" value="C:cytoplasm"/>
    <property type="evidence" value="ECO:0000314"/>
    <property type="project" value="UniProtKB"/>
</dbReference>
<dbReference type="GO" id="GO:0042272">
    <property type="term" value="C:nuclear RNA export factor complex"/>
    <property type="evidence" value="ECO:0000250"/>
    <property type="project" value="ComplexPortal"/>
</dbReference>
<dbReference type="GO" id="GO:0005634">
    <property type="term" value="C:nucleus"/>
    <property type="evidence" value="ECO:0000314"/>
    <property type="project" value="UniProtKB"/>
</dbReference>
<dbReference type="GO" id="GO:0003723">
    <property type="term" value="F:RNA binding"/>
    <property type="evidence" value="ECO:0000314"/>
    <property type="project" value="UniProtKB"/>
</dbReference>
<dbReference type="GO" id="GO:0006406">
    <property type="term" value="P:mRNA export from nucleus"/>
    <property type="evidence" value="ECO:0000314"/>
    <property type="project" value="UniProtKB"/>
</dbReference>
<dbReference type="GO" id="GO:0016973">
    <property type="term" value="P:poly(A)+ mRNA export from nucleus"/>
    <property type="evidence" value="ECO:0000318"/>
    <property type="project" value="GO_Central"/>
</dbReference>
<dbReference type="GO" id="GO:0050658">
    <property type="term" value="P:RNA transport"/>
    <property type="evidence" value="ECO:0000314"/>
    <property type="project" value="UniProtKB"/>
</dbReference>
<dbReference type="FunFam" id="3.30.70.330:FF:000165">
    <property type="entry name" value="nuclear RNA export factor 1"/>
    <property type="match status" value="1"/>
</dbReference>
<dbReference type="FunFam" id="3.80.10.10:FF:000183">
    <property type="entry name" value="nuclear RNA export factor 2-like"/>
    <property type="match status" value="1"/>
</dbReference>
<dbReference type="FunFam" id="3.10.450.50:FF:000054">
    <property type="entry name" value="Nuclear RNA export factor 5"/>
    <property type="match status" value="1"/>
</dbReference>
<dbReference type="Gene3D" id="3.10.450.50">
    <property type="match status" value="1"/>
</dbReference>
<dbReference type="Gene3D" id="3.30.70.330">
    <property type="match status" value="1"/>
</dbReference>
<dbReference type="Gene3D" id="3.80.10.10">
    <property type="entry name" value="Ribonuclease Inhibitor"/>
    <property type="match status" value="1"/>
</dbReference>
<dbReference type="InterPro" id="IPR001611">
    <property type="entry name" value="Leu-rich_rpt"/>
</dbReference>
<dbReference type="InterPro" id="IPR032675">
    <property type="entry name" value="LRR_dom_sf"/>
</dbReference>
<dbReference type="InterPro" id="IPR032710">
    <property type="entry name" value="NTF2-like_dom_sf"/>
</dbReference>
<dbReference type="InterPro" id="IPR002075">
    <property type="entry name" value="NTF2_dom"/>
</dbReference>
<dbReference type="InterPro" id="IPR012677">
    <property type="entry name" value="Nucleotide-bd_a/b_plait_sf"/>
</dbReference>
<dbReference type="InterPro" id="IPR030217">
    <property type="entry name" value="NXF_fam"/>
</dbReference>
<dbReference type="InterPro" id="IPR035979">
    <property type="entry name" value="RBD_domain_sf"/>
</dbReference>
<dbReference type="InterPro" id="IPR015245">
    <property type="entry name" value="Tap_RNA-bd"/>
</dbReference>
<dbReference type="PANTHER" id="PTHR10662">
    <property type="entry name" value="NUCLEAR RNA EXPORT FACTOR"/>
    <property type="match status" value="1"/>
</dbReference>
<dbReference type="PANTHER" id="PTHR10662:SF15">
    <property type="entry name" value="NUCLEAR RNA EXPORT FACTOR 5"/>
    <property type="match status" value="1"/>
</dbReference>
<dbReference type="Pfam" id="PF24048">
    <property type="entry name" value="LRR_NXF1-5"/>
    <property type="match status" value="1"/>
</dbReference>
<dbReference type="Pfam" id="PF22602">
    <property type="entry name" value="NXF_NTF2"/>
    <property type="match status" value="1"/>
</dbReference>
<dbReference type="Pfam" id="PF09162">
    <property type="entry name" value="Tap-RNA_bind"/>
    <property type="match status" value="1"/>
</dbReference>
<dbReference type="SUPFAM" id="SSF52058">
    <property type="entry name" value="L domain-like"/>
    <property type="match status" value="1"/>
</dbReference>
<dbReference type="SUPFAM" id="SSF54427">
    <property type="entry name" value="NTF2-like"/>
    <property type="match status" value="1"/>
</dbReference>
<dbReference type="SUPFAM" id="SSF54928">
    <property type="entry name" value="RNA-binding domain, RBD"/>
    <property type="match status" value="1"/>
</dbReference>
<dbReference type="PROSITE" id="PS51450">
    <property type="entry name" value="LRR"/>
    <property type="match status" value="3"/>
</dbReference>
<reference key="1">
    <citation type="journal article" date="2001" name="Curr. Biol.">
        <title>NXF5, a novel member of the nuclear RNA export factor family, is lost in a male patient with a syndromic form of mental retardation.</title>
        <authorList>
            <person name="Jun L."/>
            <person name="Frints S."/>
            <person name="Duhamel H."/>
            <person name="Herold A."/>
            <person name="Abad-Rodrigues J."/>
            <person name="Dotti C."/>
            <person name="Izaurralde E."/>
            <person name="Marynen P."/>
            <person name="Froyen G."/>
        </authorList>
    </citation>
    <scope>NUCLEOTIDE SEQUENCE [MRNA] (ISOFORMS A; B; C; D AND E)</scope>
    <scope>CHROMOSOMAL INVERSION</scope>
    <source>
        <tissue>Fetal brain</tissue>
    </source>
</reference>
<reference key="2">
    <citation type="journal article" date="2005" name="Nature">
        <title>The DNA sequence of the human X chromosome.</title>
        <authorList>
            <person name="Ross M.T."/>
            <person name="Grafham D.V."/>
            <person name="Coffey A.J."/>
            <person name="Scherer S."/>
            <person name="McLay K."/>
            <person name="Muzny D."/>
            <person name="Platzer M."/>
            <person name="Howell G.R."/>
            <person name="Burrows C."/>
            <person name="Bird C.P."/>
            <person name="Frankish A."/>
            <person name="Lovell F.L."/>
            <person name="Howe K.L."/>
            <person name="Ashurst J.L."/>
            <person name="Fulton R.S."/>
            <person name="Sudbrak R."/>
            <person name="Wen G."/>
            <person name="Jones M.C."/>
            <person name="Hurles M.E."/>
            <person name="Andrews T.D."/>
            <person name="Scott C.E."/>
            <person name="Searle S."/>
            <person name="Ramser J."/>
            <person name="Whittaker A."/>
            <person name="Deadman R."/>
            <person name="Carter N.P."/>
            <person name="Hunt S.E."/>
            <person name="Chen R."/>
            <person name="Cree A."/>
            <person name="Gunaratne P."/>
            <person name="Havlak P."/>
            <person name="Hodgson A."/>
            <person name="Metzker M.L."/>
            <person name="Richards S."/>
            <person name="Scott G."/>
            <person name="Steffen D."/>
            <person name="Sodergren E."/>
            <person name="Wheeler D.A."/>
            <person name="Worley K.C."/>
            <person name="Ainscough R."/>
            <person name="Ambrose K.D."/>
            <person name="Ansari-Lari M.A."/>
            <person name="Aradhya S."/>
            <person name="Ashwell R.I."/>
            <person name="Babbage A.K."/>
            <person name="Bagguley C.L."/>
            <person name="Ballabio A."/>
            <person name="Banerjee R."/>
            <person name="Barker G.E."/>
            <person name="Barlow K.F."/>
            <person name="Barrett I.P."/>
            <person name="Bates K.N."/>
            <person name="Beare D.M."/>
            <person name="Beasley H."/>
            <person name="Beasley O."/>
            <person name="Beck A."/>
            <person name="Bethel G."/>
            <person name="Blechschmidt K."/>
            <person name="Brady N."/>
            <person name="Bray-Allen S."/>
            <person name="Bridgeman A.M."/>
            <person name="Brown A.J."/>
            <person name="Brown M.J."/>
            <person name="Bonnin D."/>
            <person name="Bruford E.A."/>
            <person name="Buhay C."/>
            <person name="Burch P."/>
            <person name="Burford D."/>
            <person name="Burgess J."/>
            <person name="Burrill W."/>
            <person name="Burton J."/>
            <person name="Bye J.M."/>
            <person name="Carder C."/>
            <person name="Carrel L."/>
            <person name="Chako J."/>
            <person name="Chapman J.C."/>
            <person name="Chavez D."/>
            <person name="Chen E."/>
            <person name="Chen G."/>
            <person name="Chen Y."/>
            <person name="Chen Z."/>
            <person name="Chinault C."/>
            <person name="Ciccodicola A."/>
            <person name="Clark S.Y."/>
            <person name="Clarke G."/>
            <person name="Clee C.M."/>
            <person name="Clegg S."/>
            <person name="Clerc-Blankenburg K."/>
            <person name="Clifford K."/>
            <person name="Cobley V."/>
            <person name="Cole C.G."/>
            <person name="Conquer J.S."/>
            <person name="Corby N."/>
            <person name="Connor R.E."/>
            <person name="David R."/>
            <person name="Davies J."/>
            <person name="Davis C."/>
            <person name="Davis J."/>
            <person name="Delgado O."/>
            <person name="Deshazo D."/>
            <person name="Dhami P."/>
            <person name="Ding Y."/>
            <person name="Dinh H."/>
            <person name="Dodsworth S."/>
            <person name="Draper H."/>
            <person name="Dugan-Rocha S."/>
            <person name="Dunham A."/>
            <person name="Dunn M."/>
            <person name="Durbin K.J."/>
            <person name="Dutta I."/>
            <person name="Eades T."/>
            <person name="Ellwood M."/>
            <person name="Emery-Cohen A."/>
            <person name="Errington H."/>
            <person name="Evans K.L."/>
            <person name="Faulkner L."/>
            <person name="Francis F."/>
            <person name="Frankland J."/>
            <person name="Fraser A.E."/>
            <person name="Galgoczy P."/>
            <person name="Gilbert J."/>
            <person name="Gill R."/>
            <person name="Gloeckner G."/>
            <person name="Gregory S.G."/>
            <person name="Gribble S."/>
            <person name="Griffiths C."/>
            <person name="Grocock R."/>
            <person name="Gu Y."/>
            <person name="Gwilliam R."/>
            <person name="Hamilton C."/>
            <person name="Hart E.A."/>
            <person name="Hawes A."/>
            <person name="Heath P.D."/>
            <person name="Heitmann K."/>
            <person name="Hennig S."/>
            <person name="Hernandez J."/>
            <person name="Hinzmann B."/>
            <person name="Ho S."/>
            <person name="Hoffs M."/>
            <person name="Howden P.J."/>
            <person name="Huckle E.J."/>
            <person name="Hume J."/>
            <person name="Hunt P.J."/>
            <person name="Hunt A.R."/>
            <person name="Isherwood J."/>
            <person name="Jacob L."/>
            <person name="Johnson D."/>
            <person name="Jones S."/>
            <person name="de Jong P.J."/>
            <person name="Joseph S.S."/>
            <person name="Keenan S."/>
            <person name="Kelly S."/>
            <person name="Kershaw J.K."/>
            <person name="Khan Z."/>
            <person name="Kioschis P."/>
            <person name="Klages S."/>
            <person name="Knights A.J."/>
            <person name="Kosiura A."/>
            <person name="Kovar-Smith C."/>
            <person name="Laird G.K."/>
            <person name="Langford C."/>
            <person name="Lawlor S."/>
            <person name="Leversha M."/>
            <person name="Lewis L."/>
            <person name="Liu W."/>
            <person name="Lloyd C."/>
            <person name="Lloyd D.M."/>
            <person name="Loulseged H."/>
            <person name="Loveland J.E."/>
            <person name="Lovell J.D."/>
            <person name="Lozado R."/>
            <person name="Lu J."/>
            <person name="Lyne R."/>
            <person name="Ma J."/>
            <person name="Maheshwari M."/>
            <person name="Matthews L.H."/>
            <person name="McDowall J."/>
            <person name="McLaren S."/>
            <person name="McMurray A."/>
            <person name="Meidl P."/>
            <person name="Meitinger T."/>
            <person name="Milne S."/>
            <person name="Miner G."/>
            <person name="Mistry S.L."/>
            <person name="Morgan M."/>
            <person name="Morris S."/>
            <person name="Mueller I."/>
            <person name="Mullikin J.C."/>
            <person name="Nguyen N."/>
            <person name="Nordsiek G."/>
            <person name="Nyakatura G."/>
            <person name="O'dell C.N."/>
            <person name="Okwuonu G."/>
            <person name="Palmer S."/>
            <person name="Pandian R."/>
            <person name="Parker D."/>
            <person name="Parrish J."/>
            <person name="Pasternak S."/>
            <person name="Patel D."/>
            <person name="Pearce A.V."/>
            <person name="Pearson D.M."/>
            <person name="Pelan S.E."/>
            <person name="Perez L."/>
            <person name="Porter K.M."/>
            <person name="Ramsey Y."/>
            <person name="Reichwald K."/>
            <person name="Rhodes S."/>
            <person name="Ridler K.A."/>
            <person name="Schlessinger D."/>
            <person name="Schueler M.G."/>
            <person name="Sehra H.K."/>
            <person name="Shaw-Smith C."/>
            <person name="Shen H."/>
            <person name="Sheridan E.M."/>
            <person name="Shownkeen R."/>
            <person name="Skuce C.D."/>
            <person name="Smith M.L."/>
            <person name="Sotheran E.C."/>
            <person name="Steingruber H.E."/>
            <person name="Steward C.A."/>
            <person name="Storey R."/>
            <person name="Swann R.M."/>
            <person name="Swarbreck D."/>
            <person name="Tabor P.E."/>
            <person name="Taudien S."/>
            <person name="Taylor T."/>
            <person name="Teague B."/>
            <person name="Thomas K."/>
            <person name="Thorpe A."/>
            <person name="Timms K."/>
            <person name="Tracey A."/>
            <person name="Trevanion S."/>
            <person name="Tromans A.C."/>
            <person name="d'Urso M."/>
            <person name="Verduzco D."/>
            <person name="Villasana D."/>
            <person name="Waldron L."/>
            <person name="Wall M."/>
            <person name="Wang Q."/>
            <person name="Warren J."/>
            <person name="Warry G.L."/>
            <person name="Wei X."/>
            <person name="West A."/>
            <person name="Whitehead S.L."/>
            <person name="Whiteley M.N."/>
            <person name="Wilkinson J.E."/>
            <person name="Willey D.L."/>
            <person name="Williams G."/>
            <person name="Williams L."/>
            <person name="Williamson A."/>
            <person name="Williamson H."/>
            <person name="Wilming L."/>
            <person name="Woodmansey R.L."/>
            <person name="Wray P.W."/>
            <person name="Yen J."/>
            <person name="Zhang J."/>
            <person name="Zhou J."/>
            <person name="Zoghbi H."/>
            <person name="Zorilla S."/>
            <person name="Buck D."/>
            <person name="Reinhardt R."/>
            <person name="Poustka A."/>
            <person name="Rosenthal A."/>
            <person name="Lehrach H."/>
            <person name="Meindl A."/>
            <person name="Minx P.J."/>
            <person name="Hillier L.W."/>
            <person name="Willard H.F."/>
            <person name="Wilson R.K."/>
            <person name="Waterston R.H."/>
            <person name="Rice C.M."/>
            <person name="Vaudin M."/>
            <person name="Coulson A."/>
            <person name="Nelson D.L."/>
            <person name="Weinstock G."/>
            <person name="Sulston J.E."/>
            <person name="Durbin R.M."/>
            <person name="Hubbard T."/>
            <person name="Gibbs R.A."/>
            <person name="Beck S."/>
            <person name="Rogers J."/>
            <person name="Bentley D.R."/>
        </authorList>
    </citation>
    <scope>NUCLEOTIDE SEQUENCE [LARGE SCALE GENOMIC DNA]</scope>
</reference>
<reference key="3">
    <citation type="journal article" date="2004" name="Genome Res.">
        <title>The status, quality, and expansion of the NIH full-length cDNA project: the Mammalian Gene Collection (MGC).</title>
        <authorList>
            <consortium name="The MGC Project Team"/>
        </authorList>
    </citation>
    <scope>NUCLEOTIDE SEQUENCE [LARGE SCALE MRNA] (ISOFORM F)</scope>
</reference>
<reference key="4">
    <citation type="journal article" date="2004" name="Genome Biol.">
        <title>An unappreciated role for RNA surveillance.</title>
        <authorList>
            <person name="Hillman R.T."/>
            <person name="Green R.E."/>
            <person name="Brenner S.E."/>
        </authorList>
    </citation>
    <scope>SPLICE ISOFORM(S) THAT ARE POTENTIAL NMD TARGET(S)</scope>
</reference>
<evidence type="ECO:0000250" key="1"/>
<evidence type="ECO:0000269" key="2">
    <source>
    </source>
</evidence>
<evidence type="ECO:0000303" key="3">
    <source>
    </source>
</evidence>
<evidence type="ECO:0000303" key="4">
    <source>
    </source>
</evidence>
<evidence type="ECO:0000305" key="5"/>
<feature type="chain" id="PRO_0000220535" description="Nuclear RNA export factor 5">
    <location>
        <begin position="1"/>
        <end position="397"/>
    </location>
</feature>
<feature type="domain" description="RRM">
    <location>
        <begin position="13"/>
        <end position="92"/>
    </location>
</feature>
<feature type="repeat" description="LRR 1">
    <location>
        <begin position="160"/>
        <end position="185"/>
    </location>
</feature>
<feature type="repeat" description="LRR 2">
    <location>
        <begin position="186"/>
        <end position="209"/>
    </location>
</feature>
<feature type="repeat" description="LRR 3">
    <location>
        <begin position="210"/>
        <end position="237"/>
    </location>
</feature>
<feature type="repeat" description="LRR 4">
    <location>
        <begin position="238"/>
        <end position="265"/>
    </location>
</feature>
<feature type="domain" description="NTF2; truncated">
    <location>
        <begin position="280"/>
        <end position="367"/>
    </location>
</feature>
<feature type="splice variant" id="VSP_003731" description="In isoform D and isoform E." evidence="3">
    <location>
        <begin position="18"/>
        <end position="80"/>
    </location>
</feature>
<feature type="splice variant" id="VSP_003732" description="In isoform C." evidence="3">
    <original>LLSLNLCN</original>
    <variation>RRLPKSRP</variation>
    <location>
        <begin position="161"/>
        <end position="168"/>
    </location>
</feature>
<feature type="splice variant" id="VSP_003733" description="In isoform C." evidence="3">
    <location>
        <begin position="169"/>
        <end position="397"/>
    </location>
</feature>
<feature type="splice variant" id="VSP_043896" description="In isoform F." evidence="4">
    <original>RWWCLLSLKWKDGLRVLILPSCGPSSLPLAAIPVCAS</original>
    <variation>SLRPL</variation>
    <location>
        <begin position="361"/>
        <end position="397"/>
    </location>
</feature>
<feature type="splice variant" id="VSP_003734" description="In isoform B and isoform D." evidence="3">
    <original>RWWCLLSL</original>
    <variation>SGRMVSGF</variation>
    <location>
        <begin position="361"/>
        <end position="368"/>
    </location>
</feature>
<feature type="splice variant" id="VSP_003735" description="In isoform E." evidence="3">
    <original>WCL</original>
    <variation>VGG</variation>
    <location>
        <begin position="363"/>
        <end position="365"/>
    </location>
</feature>
<feature type="splice variant" id="VSP_003736" description="In isoform E." evidence="3">
    <location>
        <begin position="366"/>
        <end position="397"/>
    </location>
</feature>
<feature type="splice variant" id="VSP_003737" description="In isoform D and isoform B." evidence="3">
    <location>
        <begin position="369"/>
        <end position="397"/>
    </location>
</feature>
<accession>Q9H1B4</accession>
<accession>A2RRM0</accession>
<accession>B1AV82</accession>
<accession>B1AV83</accession>
<accession>B1AV84</accession>
<accession>B1AV85</accession>
<accession>Q9H1B0</accession>
<accession>Q9H1B1</accession>
<accession>Q9H1B2</accession>
<accession>Q9H1B3</accession>
<proteinExistence type="evidence at transcript level"/>